<reference key="1">
    <citation type="journal article" date="1998" name="DNA Res.">
        <title>Complete sequence and gene organization of the genome of a hyper-thermophilic archaebacterium, Pyrococcus horikoshii OT3.</title>
        <authorList>
            <person name="Kawarabayasi Y."/>
            <person name="Sawada M."/>
            <person name="Horikawa H."/>
            <person name="Haikawa Y."/>
            <person name="Hino Y."/>
            <person name="Yamamoto S."/>
            <person name="Sekine M."/>
            <person name="Baba S."/>
            <person name="Kosugi H."/>
            <person name="Hosoyama A."/>
            <person name="Nagai Y."/>
            <person name="Sakai M."/>
            <person name="Ogura K."/>
            <person name="Otsuka R."/>
            <person name="Nakazawa H."/>
            <person name="Takamiya M."/>
            <person name="Ohfuku Y."/>
            <person name="Funahashi T."/>
            <person name="Tanaka T."/>
            <person name="Kudoh Y."/>
            <person name="Yamazaki J."/>
            <person name="Kushida N."/>
            <person name="Oguchi A."/>
            <person name="Aoki K."/>
            <person name="Yoshizawa T."/>
            <person name="Nakamura Y."/>
            <person name="Robb F.T."/>
            <person name="Horikoshi K."/>
            <person name="Masuchi Y."/>
            <person name="Shizuya H."/>
            <person name="Kikuchi H."/>
        </authorList>
    </citation>
    <scope>NUCLEOTIDE SEQUENCE [LARGE SCALE GENOMIC DNA]</scope>
    <source>
        <strain>ATCC 700860 / DSM 12428 / JCM 9974 / NBRC 100139 / OT-3</strain>
    </source>
</reference>
<reference key="2">
    <citation type="journal article" date="2004" name="Biochem. Biophys. Res. Commun.">
        <title>Structural evidence for guanidine-protein side chain interactions: crystal structure of CutA from Pyrococcus horikoshii in 3 M guanidine hydrochloride.</title>
        <authorList>
            <person name="Tanaka Y."/>
            <person name="Tsumoto K."/>
            <person name="Umetsu M."/>
            <person name="Nakanishi T."/>
            <person name="Yasutake Y."/>
            <person name="Sakai N."/>
            <person name="Yao M."/>
            <person name="Tanaka I."/>
            <person name="Arakawa T."/>
            <person name="Kumagai I."/>
        </authorList>
    </citation>
    <scope>X-RAY CRYSTALLOGRAPHY (1.6 ANGSTROMS)</scope>
</reference>
<reference key="3">
    <citation type="journal article" date="2004" name="FEBS Lett.">
        <title>Structural implications for heavy metal-induced reversible assembly and aggregation of a protein: the case of Pyrococcus horikoshii CutA.</title>
        <authorList>
            <person name="Tanaka Y."/>
            <person name="Tsumoto K."/>
            <person name="Nakanishi T."/>
            <person name="Yasutake Y."/>
            <person name="Sakai N."/>
            <person name="Yao M."/>
            <person name="Tanaka I."/>
            <person name="Kumagai I."/>
        </authorList>
    </citation>
    <scope>X-RAY CRYSTALLOGRAPHY (1.45 ANGSTROMS)</scope>
</reference>
<reference key="4">
    <citation type="journal article" date="2004" name="FEBS Lett.">
        <title>Structural characteristics and refolding of in vivo aggregated hyperthermophilic archaeon proteins.</title>
        <authorList>
            <person name="Umetsu M."/>
            <person name="Tsumoto K."/>
            <person name="Ashish K."/>
            <person name="Nitta S."/>
            <person name="Tanaka Y."/>
            <person name="Adschiri T."/>
            <person name="Kumagai I."/>
        </authorList>
    </citation>
    <scope>X-RAY CRYSTALLOGRAPHY (2.0 ANGSTROMS)</scope>
</reference>
<feature type="chain" id="PRO_0000157129" description="Divalent-cation tolerance protein CutA">
    <location>
        <begin position="1"/>
        <end position="102"/>
    </location>
</feature>
<feature type="binding site">
    <location>
        <position position="48"/>
    </location>
    <ligand>
        <name>Cu cation</name>
        <dbReference type="ChEBI" id="CHEBI:23378"/>
    </ligand>
</feature>
<feature type="strand" evidence="2">
    <location>
        <begin position="2"/>
        <end position="10"/>
    </location>
</feature>
<feature type="helix" evidence="2">
    <location>
        <begin position="11"/>
        <end position="23"/>
    </location>
</feature>
<feature type="strand" evidence="2">
    <location>
        <begin position="28"/>
        <end position="41"/>
    </location>
</feature>
<feature type="strand" evidence="2">
    <location>
        <begin position="44"/>
        <end position="57"/>
    </location>
</feature>
<feature type="helix" evidence="2">
    <location>
        <begin position="59"/>
        <end position="61"/>
    </location>
</feature>
<feature type="helix" evidence="2">
    <location>
        <begin position="62"/>
        <end position="72"/>
    </location>
</feature>
<feature type="strand" evidence="2">
    <location>
        <begin position="74"/>
        <end position="77"/>
    </location>
</feature>
<feature type="strand" evidence="2">
    <location>
        <begin position="81"/>
        <end position="84"/>
    </location>
</feature>
<feature type="strand" evidence="3">
    <location>
        <begin position="86"/>
        <end position="88"/>
    </location>
</feature>
<feature type="helix" evidence="2">
    <location>
        <begin position="90"/>
        <end position="99"/>
    </location>
</feature>
<gene>
    <name type="primary">cutA</name>
    <name type="ordered locus">PH0992</name>
</gene>
<proteinExistence type="evidence at protein level"/>
<evidence type="ECO:0000305" key="1"/>
<evidence type="ECO:0007829" key="2">
    <source>
        <dbReference type="PDB" id="1UKU"/>
    </source>
</evidence>
<evidence type="ECO:0007829" key="3">
    <source>
        <dbReference type="PDB" id="4NYO"/>
    </source>
</evidence>
<name>CUTA_PYRHO</name>
<dbReference type="EMBL" id="BA000001">
    <property type="protein sequence ID" value="BAA30089.1"/>
    <property type="molecule type" value="Genomic_DNA"/>
</dbReference>
<dbReference type="PIR" id="C71091">
    <property type="entry name" value="C71091"/>
</dbReference>
<dbReference type="RefSeq" id="WP_010885081.1">
    <property type="nucleotide sequence ID" value="NC_000961.1"/>
</dbReference>
<dbReference type="PDB" id="1J2V">
    <property type="method" value="X-ray"/>
    <property type="resolution" value="2.00 A"/>
    <property type="chains" value="A=1-102"/>
</dbReference>
<dbReference type="PDB" id="1UKU">
    <property type="method" value="X-ray"/>
    <property type="resolution" value="1.45 A"/>
    <property type="chains" value="A=1-102"/>
</dbReference>
<dbReference type="PDB" id="1UMJ">
    <property type="method" value="X-ray"/>
    <property type="resolution" value="1.60 A"/>
    <property type="chains" value="A/B=1-102"/>
</dbReference>
<dbReference type="PDB" id="2E66">
    <property type="method" value="X-ray"/>
    <property type="resolution" value="2.00 A"/>
    <property type="chains" value="A/B/C=1-102"/>
</dbReference>
<dbReference type="PDB" id="4NYO">
    <property type="method" value="X-ray"/>
    <property type="resolution" value="1.80 A"/>
    <property type="chains" value="A/B/C/D/E/F=1-102"/>
</dbReference>
<dbReference type="PDB" id="4NYP">
    <property type="method" value="X-ray"/>
    <property type="resolution" value="2.00 A"/>
    <property type="chains" value="A/B/C/D/E/F=1-102"/>
</dbReference>
<dbReference type="PDBsum" id="1J2V"/>
<dbReference type="PDBsum" id="1UKU"/>
<dbReference type="PDBsum" id="1UMJ"/>
<dbReference type="PDBsum" id="2E66"/>
<dbReference type="PDBsum" id="4NYO"/>
<dbReference type="PDBsum" id="4NYP"/>
<dbReference type="SMR" id="O58720"/>
<dbReference type="STRING" id="70601.gene:9377948"/>
<dbReference type="EnsemblBacteria" id="BAA30089">
    <property type="protein sequence ID" value="BAA30089"/>
    <property type="gene ID" value="BAA30089"/>
</dbReference>
<dbReference type="GeneID" id="1443316"/>
<dbReference type="KEGG" id="pho:PH0992"/>
<dbReference type="eggNOG" id="arCOG04231">
    <property type="taxonomic scope" value="Archaea"/>
</dbReference>
<dbReference type="OrthoDB" id="8015at2157"/>
<dbReference type="EvolutionaryTrace" id="O58720"/>
<dbReference type="Proteomes" id="UP000000752">
    <property type="component" value="Chromosome"/>
</dbReference>
<dbReference type="GO" id="GO:0005737">
    <property type="term" value="C:cytoplasm"/>
    <property type="evidence" value="ECO:0007669"/>
    <property type="project" value="UniProtKB-SubCell"/>
</dbReference>
<dbReference type="GO" id="GO:0005507">
    <property type="term" value="F:copper ion binding"/>
    <property type="evidence" value="ECO:0007669"/>
    <property type="project" value="TreeGrafter"/>
</dbReference>
<dbReference type="GO" id="GO:0010038">
    <property type="term" value="P:response to metal ion"/>
    <property type="evidence" value="ECO:0007669"/>
    <property type="project" value="InterPro"/>
</dbReference>
<dbReference type="Gene3D" id="3.30.70.120">
    <property type="match status" value="1"/>
</dbReference>
<dbReference type="InterPro" id="IPR053426">
    <property type="entry name" value="CutA_tolerance"/>
</dbReference>
<dbReference type="InterPro" id="IPR004323">
    <property type="entry name" value="Ion_tolerance_CutA"/>
</dbReference>
<dbReference type="InterPro" id="IPR011322">
    <property type="entry name" value="N-reg_PII-like_a/b"/>
</dbReference>
<dbReference type="InterPro" id="IPR015867">
    <property type="entry name" value="N-reg_PII/ATP_PRibTrfase_C"/>
</dbReference>
<dbReference type="NCBIfam" id="NF041095">
    <property type="entry name" value="dival_cat_tol_CutA"/>
    <property type="match status" value="1"/>
</dbReference>
<dbReference type="PANTHER" id="PTHR23419">
    <property type="entry name" value="DIVALENT CATION TOLERANCE CUTA-RELATED"/>
    <property type="match status" value="1"/>
</dbReference>
<dbReference type="PANTHER" id="PTHR23419:SF8">
    <property type="entry name" value="FI09726P"/>
    <property type="match status" value="1"/>
</dbReference>
<dbReference type="Pfam" id="PF03091">
    <property type="entry name" value="CutA1"/>
    <property type="match status" value="1"/>
</dbReference>
<dbReference type="SUPFAM" id="SSF54913">
    <property type="entry name" value="GlnB-like"/>
    <property type="match status" value="1"/>
</dbReference>
<keyword id="KW-0002">3D-structure</keyword>
<keyword id="KW-0186">Copper</keyword>
<keyword id="KW-0963">Cytoplasm</keyword>
<keyword id="KW-0479">Metal-binding</keyword>
<comment type="function">
    <text>Involved in resistance toward heavy metals.</text>
</comment>
<comment type="cofactor">
    <cofactor evidence="1">
        <name>Cu cation</name>
        <dbReference type="ChEBI" id="CHEBI:23378"/>
    </cofactor>
    <text evidence="1">Binds 1 copper ion in the interface between two trimers.</text>
</comment>
<comment type="subunit">
    <text>Homotrimer. The binding of the copper ion probably leads to oligomerization.</text>
</comment>
<comment type="subcellular location">
    <subcellularLocation>
        <location>Cytoplasm</location>
    </subcellularLocation>
</comment>
<comment type="similarity">
    <text evidence="1">Belongs to the CutA family.</text>
</comment>
<protein>
    <recommendedName>
        <fullName>Divalent-cation tolerance protein CutA</fullName>
    </recommendedName>
</protein>
<accession>O58720</accession>
<sequence>MIIVYTTFPDWESAEKVVKTLLKERLIACANLREHRAFYWWEGKIEEDKEVGAILKTREDLWEELKERIKELHPYDVPAIIRIDVDDVNEDYLKWLIEETKK</sequence>
<organism>
    <name type="scientific">Pyrococcus horikoshii (strain ATCC 700860 / DSM 12428 / JCM 9974 / NBRC 100139 / OT-3)</name>
    <dbReference type="NCBI Taxonomy" id="70601"/>
    <lineage>
        <taxon>Archaea</taxon>
        <taxon>Methanobacteriati</taxon>
        <taxon>Methanobacteriota</taxon>
        <taxon>Thermococci</taxon>
        <taxon>Thermococcales</taxon>
        <taxon>Thermococcaceae</taxon>
        <taxon>Pyrococcus</taxon>
    </lineage>
</organism>